<accession>C6JUP2</accession>
<comment type="function">
    <text evidence="1">Binds with low affinity to muscular (alpha-1-beta-1-delta-epsilon/CHRNA1-CHRNB1-CHRND-CHRNE) and very low affinity to neuronal (alpha-7/CHRNA7) nicotinic acetylcholine receptor (nAChR).</text>
</comment>
<comment type="subcellular location">
    <subcellularLocation>
        <location evidence="3">Secreted</location>
    </subcellularLocation>
</comment>
<comment type="tissue specificity">
    <text evidence="4">Expressed by the venom gland.</text>
</comment>
<comment type="similarity">
    <text evidence="4">Belongs to the three-finger toxin family. Ancestral subfamily. Orphan group II sub-subfamily.</text>
</comment>
<dbReference type="EMBL" id="GQ139602">
    <property type="protein sequence ID" value="ACS74996.1"/>
    <property type="molecule type" value="mRNA"/>
</dbReference>
<dbReference type="SMR" id="C6JUP2"/>
<dbReference type="GO" id="GO:0005576">
    <property type="term" value="C:extracellular region"/>
    <property type="evidence" value="ECO:0007669"/>
    <property type="project" value="UniProtKB-SubCell"/>
</dbReference>
<dbReference type="GO" id="GO:0030550">
    <property type="term" value="F:acetylcholine receptor inhibitor activity"/>
    <property type="evidence" value="ECO:0007669"/>
    <property type="project" value="UniProtKB-KW"/>
</dbReference>
<dbReference type="GO" id="GO:0090729">
    <property type="term" value="F:toxin activity"/>
    <property type="evidence" value="ECO:0007669"/>
    <property type="project" value="UniProtKB-KW"/>
</dbReference>
<dbReference type="CDD" id="cd00206">
    <property type="entry name" value="TFP_snake_toxin"/>
    <property type="match status" value="1"/>
</dbReference>
<dbReference type="Gene3D" id="2.10.60.10">
    <property type="entry name" value="CD59"/>
    <property type="match status" value="1"/>
</dbReference>
<dbReference type="InterPro" id="IPR003571">
    <property type="entry name" value="Snake_3FTx"/>
</dbReference>
<dbReference type="InterPro" id="IPR045860">
    <property type="entry name" value="Snake_toxin-like_sf"/>
</dbReference>
<dbReference type="InterPro" id="IPR018354">
    <property type="entry name" value="Snake_toxin_con_site"/>
</dbReference>
<dbReference type="InterPro" id="IPR054131">
    <property type="entry name" value="Toxin_cobra-type"/>
</dbReference>
<dbReference type="Pfam" id="PF21947">
    <property type="entry name" value="Toxin_cobra-type"/>
    <property type="match status" value="1"/>
</dbReference>
<dbReference type="SUPFAM" id="SSF57302">
    <property type="entry name" value="Snake toxin-like"/>
    <property type="match status" value="1"/>
</dbReference>
<dbReference type="PROSITE" id="PS00272">
    <property type="entry name" value="SNAKE_TOXIN"/>
    <property type="match status" value="1"/>
</dbReference>
<proteinExistence type="evidence at protein level"/>
<name>3NO22_MICCO</name>
<feature type="signal peptide" evidence="3">
    <location>
        <begin position="1"/>
        <end position="21"/>
    </location>
</feature>
<feature type="chain" id="PRO_0000422893" description="Three-finger toxin 3FTx-2" evidence="5">
    <location>
        <begin position="22"/>
        <end position="88"/>
    </location>
</feature>
<feature type="disulfide bond" evidence="2">
    <location>
        <begin position="27"/>
        <end position="48"/>
    </location>
</feature>
<feature type="disulfide bond" evidence="2">
    <location>
        <begin position="41"/>
        <end position="66"/>
    </location>
</feature>
<feature type="disulfide bond" evidence="2">
    <location>
        <begin position="70"/>
        <end position="81"/>
    </location>
</feature>
<feature type="disulfide bond" evidence="2">
    <location>
        <begin position="82"/>
        <end position="87"/>
    </location>
</feature>
<sequence length="88" mass="9984">MKTLLLTLVVVTIVCLDLGNTANTLFCDNSNVPSIRTRKRCLKNQKLCYKMTFFTPGFGWTQIKGCIHRCPESTPNEKYQCCSTDNCI</sequence>
<organism>
    <name type="scientific">Micrurus corallinus</name>
    <name type="common">Brazilian coral snake</name>
    <dbReference type="NCBI Taxonomy" id="54390"/>
    <lineage>
        <taxon>Eukaryota</taxon>
        <taxon>Metazoa</taxon>
        <taxon>Chordata</taxon>
        <taxon>Craniata</taxon>
        <taxon>Vertebrata</taxon>
        <taxon>Euteleostomi</taxon>
        <taxon>Lepidosauria</taxon>
        <taxon>Squamata</taxon>
        <taxon>Bifurcata</taxon>
        <taxon>Unidentata</taxon>
        <taxon>Episquamata</taxon>
        <taxon>Toxicofera</taxon>
        <taxon>Serpentes</taxon>
        <taxon>Colubroidea</taxon>
        <taxon>Elapidae</taxon>
        <taxon>Elapinae</taxon>
        <taxon>Micrurus</taxon>
    </lineage>
</organism>
<evidence type="ECO:0000250" key="1">
    <source>
        <dbReference type="UniProtKB" id="O42255"/>
    </source>
</evidence>
<evidence type="ECO:0000250" key="2">
    <source>
        <dbReference type="UniProtKB" id="Q8AY51"/>
    </source>
</evidence>
<evidence type="ECO:0000269" key="3">
    <source>
    </source>
</evidence>
<evidence type="ECO:0000305" key="4"/>
<evidence type="ECO:0000305" key="5">
    <source>
    </source>
</evidence>
<keyword id="KW-0008">Acetylcholine receptor inhibiting toxin</keyword>
<keyword id="KW-0903">Direct protein sequencing</keyword>
<keyword id="KW-1015">Disulfide bond</keyword>
<keyword id="KW-0528">Neurotoxin</keyword>
<keyword id="KW-0629">Postsynaptic neurotoxin</keyword>
<keyword id="KW-0964">Secreted</keyword>
<keyword id="KW-0732">Signal</keyword>
<keyword id="KW-0800">Toxin</keyword>
<protein>
    <recommendedName>
        <fullName>Three-finger toxin 3FTx-2</fullName>
        <shortName>3FTx</shortName>
    </recommendedName>
</protein>
<reference key="1">
    <citation type="journal article" date="2009" name="BMC Genomics">
        <title>Transcriptomic basis for an antiserum against Micrurus corallinus (coral snake) venom.</title>
        <authorList>
            <person name="Leao L.I."/>
            <person name="Ho P.L."/>
            <person name="Junqueira-de-Azevedo I.L.M."/>
        </authorList>
    </citation>
    <scope>NUCLEOTIDE SEQUENCE [MRNA]</scope>
    <source>
        <tissue>Venom gland</tissue>
    </source>
</reference>
<reference key="2">
    <citation type="journal article" date="2011" name="J. Proteomics">
        <title>Snake venomics and venom gland transcriptomic analysis of Brazilian coral snakes, Micrurus altirostris and M. corallinus.</title>
        <authorList>
            <person name="Correa-Netto C."/>
            <person name="Junqueira-de-Azevedo Ide L."/>
            <person name="Silva D.A."/>
            <person name="Ho P.L."/>
            <person name="Leitao-de-Araujo M."/>
            <person name="Alves M.L."/>
            <person name="Sanz L."/>
            <person name="Foguel D."/>
            <person name="Zingali R.B."/>
            <person name="Calvete J.J."/>
        </authorList>
    </citation>
    <scope>PROTEIN SEQUENCE OF 22-36</scope>
    <scope>IDENTIFICATION BY MASS SPECTROMETRY</scope>
    <scope>SUBCELLULAR LOCATION</scope>
    <source>
        <tissue>Venom</tissue>
    </source>
</reference>